<gene>
    <name evidence="1" type="primary">cyaY</name>
    <name type="ordered locus">RC0443</name>
</gene>
<evidence type="ECO:0000255" key="1">
    <source>
        <dbReference type="HAMAP-Rule" id="MF_00142"/>
    </source>
</evidence>
<evidence type="ECO:0000305" key="2"/>
<name>CYAY_RICCN</name>
<sequence>MNNSEFSKIAETTIAYIAEKIEEQDKEASIDVDLQGDILNLDTDKGVYVINKQSAAKEIWLSSPVSGPYHFFYEQGEWTNRAGLELMAILTEELNIKFDTRPT</sequence>
<proteinExistence type="inferred from homology"/>
<reference key="1">
    <citation type="journal article" date="2001" name="Science">
        <title>Mechanisms of evolution in Rickettsia conorii and R. prowazekii.</title>
        <authorList>
            <person name="Ogata H."/>
            <person name="Audic S."/>
            <person name="Renesto-Audiffren P."/>
            <person name="Fournier P.-E."/>
            <person name="Barbe V."/>
            <person name="Samson D."/>
            <person name="Roux V."/>
            <person name="Cossart P."/>
            <person name="Weissenbach J."/>
            <person name="Claverie J.-M."/>
            <person name="Raoult D."/>
        </authorList>
    </citation>
    <scope>NUCLEOTIDE SEQUENCE [LARGE SCALE GENOMIC DNA]</scope>
    <source>
        <strain>ATCC VR-613 / Malish 7</strain>
    </source>
</reference>
<comment type="function">
    <text evidence="1">Involved in iron-sulfur (Fe-S) cluster assembly. May act as a regulator of Fe-S biogenesis.</text>
</comment>
<comment type="similarity">
    <text evidence="1 2">Belongs to the frataxin family.</text>
</comment>
<keyword id="KW-0408">Iron</keyword>
<keyword id="KW-0479">Metal-binding</keyword>
<protein>
    <recommendedName>
        <fullName evidence="1">Iron-sulfur cluster assembly protein CyaY</fullName>
    </recommendedName>
</protein>
<organism>
    <name type="scientific">Rickettsia conorii (strain ATCC VR-613 / Malish 7)</name>
    <dbReference type="NCBI Taxonomy" id="272944"/>
    <lineage>
        <taxon>Bacteria</taxon>
        <taxon>Pseudomonadati</taxon>
        <taxon>Pseudomonadota</taxon>
        <taxon>Alphaproteobacteria</taxon>
        <taxon>Rickettsiales</taxon>
        <taxon>Rickettsiaceae</taxon>
        <taxon>Rickettsieae</taxon>
        <taxon>Rickettsia</taxon>
        <taxon>spotted fever group</taxon>
    </lineage>
</organism>
<feature type="chain" id="PRO_0000193955" description="Iron-sulfur cluster assembly protein CyaY">
    <location>
        <begin position="1"/>
        <end position="103"/>
    </location>
</feature>
<dbReference type="EMBL" id="AE006914">
    <property type="protein sequence ID" value="AAL02981.1"/>
    <property type="molecule type" value="Genomic_DNA"/>
</dbReference>
<dbReference type="PIR" id="C97755">
    <property type="entry name" value="C97755"/>
</dbReference>
<dbReference type="RefSeq" id="WP_010977089.1">
    <property type="nucleotide sequence ID" value="NC_003103.1"/>
</dbReference>
<dbReference type="SMR" id="Q92IH7"/>
<dbReference type="GeneID" id="928680"/>
<dbReference type="KEGG" id="rco:RC0443"/>
<dbReference type="HOGENOM" id="CLU_080880_4_1_5"/>
<dbReference type="Proteomes" id="UP000000816">
    <property type="component" value="Chromosome"/>
</dbReference>
<dbReference type="GO" id="GO:0005737">
    <property type="term" value="C:cytoplasm"/>
    <property type="evidence" value="ECO:0007669"/>
    <property type="project" value="UniProtKB-ARBA"/>
</dbReference>
<dbReference type="GO" id="GO:0051537">
    <property type="term" value="F:2 iron, 2 sulfur cluster binding"/>
    <property type="evidence" value="ECO:0007669"/>
    <property type="project" value="TreeGrafter"/>
</dbReference>
<dbReference type="GO" id="GO:0008199">
    <property type="term" value="F:ferric iron binding"/>
    <property type="evidence" value="ECO:0007669"/>
    <property type="project" value="InterPro"/>
</dbReference>
<dbReference type="GO" id="GO:0008198">
    <property type="term" value="F:ferrous iron binding"/>
    <property type="evidence" value="ECO:0007669"/>
    <property type="project" value="TreeGrafter"/>
</dbReference>
<dbReference type="GO" id="GO:0004322">
    <property type="term" value="F:ferroxidase activity"/>
    <property type="evidence" value="ECO:0007669"/>
    <property type="project" value="TreeGrafter"/>
</dbReference>
<dbReference type="GO" id="GO:0034986">
    <property type="term" value="F:iron chaperone activity"/>
    <property type="evidence" value="ECO:0007669"/>
    <property type="project" value="TreeGrafter"/>
</dbReference>
<dbReference type="GO" id="GO:0006879">
    <property type="term" value="P:intracellular iron ion homeostasis"/>
    <property type="evidence" value="ECO:0007669"/>
    <property type="project" value="TreeGrafter"/>
</dbReference>
<dbReference type="GO" id="GO:0016226">
    <property type="term" value="P:iron-sulfur cluster assembly"/>
    <property type="evidence" value="ECO:0007669"/>
    <property type="project" value="UniProtKB-UniRule"/>
</dbReference>
<dbReference type="Gene3D" id="3.30.920.10">
    <property type="entry name" value="Frataxin/CyaY"/>
    <property type="match status" value="1"/>
</dbReference>
<dbReference type="HAMAP" id="MF_00142">
    <property type="entry name" value="CyaY"/>
    <property type="match status" value="1"/>
</dbReference>
<dbReference type="InterPro" id="IPR047584">
    <property type="entry name" value="CyaY"/>
</dbReference>
<dbReference type="InterPro" id="IPR002908">
    <property type="entry name" value="Frataxin/CyaY"/>
</dbReference>
<dbReference type="InterPro" id="IPR036524">
    <property type="entry name" value="Frataxin/CyaY_sf"/>
</dbReference>
<dbReference type="InterPro" id="IPR020895">
    <property type="entry name" value="Frataxin_CS"/>
</dbReference>
<dbReference type="NCBIfam" id="TIGR03421">
    <property type="entry name" value="FeS_CyaY"/>
    <property type="match status" value="1"/>
</dbReference>
<dbReference type="PANTHER" id="PTHR16821">
    <property type="entry name" value="FRATAXIN"/>
    <property type="match status" value="1"/>
</dbReference>
<dbReference type="PANTHER" id="PTHR16821:SF2">
    <property type="entry name" value="FRATAXIN, MITOCHONDRIAL"/>
    <property type="match status" value="1"/>
</dbReference>
<dbReference type="Pfam" id="PF01491">
    <property type="entry name" value="Frataxin_Cyay"/>
    <property type="match status" value="1"/>
</dbReference>
<dbReference type="SMART" id="SM01219">
    <property type="entry name" value="Frataxin_Cyay"/>
    <property type="match status" value="1"/>
</dbReference>
<dbReference type="SUPFAM" id="SSF55387">
    <property type="entry name" value="Frataxin/Nqo15-like"/>
    <property type="match status" value="1"/>
</dbReference>
<dbReference type="PROSITE" id="PS01344">
    <property type="entry name" value="FRATAXIN_1"/>
    <property type="match status" value="1"/>
</dbReference>
<dbReference type="PROSITE" id="PS50810">
    <property type="entry name" value="FRATAXIN_2"/>
    <property type="match status" value="1"/>
</dbReference>
<accession>Q92IH7</accession>